<reference key="1">
    <citation type="journal article" date="2001" name="Lancet">
        <title>Whole genome sequencing of meticillin-resistant Staphylococcus aureus.</title>
        <authorList>
            <person name="Kuroda M."/>
            <person name="Ohta T."/>
            <person name="Uchiyama I."/>
            <person name="Baba T."/>
            <person name="Yuzawa H."/>
            <person name="Kobayashi I."/>
            <person name="Cui L."/>
            <person name="Oguchi A."/>
            <person name="Aoki K."/>
            <person name="Nagai Y."/>
            <person name="Lian J.-Q."/>
            <person name="Ito T."/>
            <person name="Kanamori M."/>
            <person name="Matsumaru H."/>
            <person name="Maruyama A."/>
            <person name="Murakami H."/>
            <person name="Hosoyama A."/>
            <person name="Mizutani-Ui Y."/>
            <person name="Takahashi N.K."/>
            <person name="Sawano T."/>
            <person name="Inoue R."/>
            <person name="Kaito C."/>
            <person name="Sekimizu K."/>
            <person name="Hirakawa H."/>
            <person name="Kuhara S."/>
            <person name="Goto S."/>
            <person name="Yabuzaki J."/>
            <person name="Kanehisa M."/>
            <person name="Yamashita A."/>
            <person name="Oshima K."/>
            <person name="Furuya K."/>
            <person name="Yoshino C."/>
            <person name="Shiba T."/>
            <person name="Hattori M."/>
            <person name="Ogasawara N."/>
            <person name="Hayashi H."/>
            <person name="Hiramatsu K."/>
        </authorList>
    </citation>
    <scope>NUCLEOTIDE SEQUENCE [LARGE SCALE GENOMIC DNA]</scope>
    <source>
        <strain>N315</strain>
    </source>
</reference>
<reference key="2">
    <citation type="submission" date="2007-10" db="UniProtKB">
        <title>Shotgun proteomic analysis of total and membrane protein extracts of S. aureus strain N315.</title>
        <authorList>
            <person name="Vaezzadeh A.R."/>
            <person name="Deshusses J."/>
            <person name="Lescuyer P."/>
            <person name="Hochstrasser D.F."/>
        </authorList>
    </citation>
    <scope>IDENTIFICATION BY MASS SPECTROMETRY [LARGE SCALE ANALYSIS]</scope>
    <source>
        <strain>N315</strain>
    </source>
</reference>
<accession>Q99S77</accession>
<name>PTLCB_STAAN</name>
<organism>
    <name type="scientific">Staphylococcus aureus (strain N315)</name>
    <dbReference type="NCBI Taxonomy" id="158879"/>
    <lineage>
        <taxon>Bacteria</taxon>
        <taxon>Bacillati</taxon>
        <taxon>Bacillota</taxon>
        <taxon>Bacilli</taxon>
        <taxon>Bacillales</taxon>
        <taxon>Staphylococcaceae</taxon>
        <taxon>Staphylococcus</taxon>
    </lineage>
</organism>
<gene>
    <name evidence="1" type="primary">lacE</name>
    <name type="ordered locus">SA1992</name>
</gene>
<comment type="function">
    <text evidence="1">The phosphoenolpyruvate-dependent sugar phosphotransferase system (sugar PTS), a major carbohydrate active transport system, catalyzes the phosphorylation of incoming sugar substrates concomitantly with their translocation across the cell membrane. The enzyme II LacEF PTS system is involved in lactose transport.</text>
</comment>
<comment type="catalytic activity">
    <reaction evidence="1">
        <text>lactose(out) + N(pros)-phospho-L-histidyl-[protein] = lactose 6-phosphate(in) + L-histidyl-[protein]</text>
        <dbReference type="Rhea" id="RHEA:42400"/>
        <dbReference type="Rhea" id="RHEA-COMP:9745"/>
        <dbReference type="Rhea" id="RHEA-COMP:9746"/>
        <dbReference type="ChEBI" id="CHEBI:17716"/>
        <dbReference type="ChEBI" id="CHEBI:29979"/>
        <dbReference type="ChEBI" id="CHEBI:64837"/>
        <dbReference type="ChEBI" id="CHEBI:79080"/>
        <dbReference type="EC" id="2.7.1.207"/>
    </reaction>
</comment>
<comment type="subcellular location">
    <subcellularLocation>
        <location evidence="1 3">Cell membrane</location>
        <topology evidence="1 3">Multi-pass membrane protein</topology>
    </subcellularLocation>
</comment>
<comment type="induction">
    <text evidence="1">Induced by lactose, galactose and galactose-6-P. Repressed by glucose.</text>
</comment>
<comment type="domain">
    <text evidence="3">The EIIC type-3 domain forms the PTS system translocation channel and contains the specific substrate-binding site.</text>
</comment>
<comment type="domain">
    <text evidence="2">The PTS EIIB type-3 domain is phosphorylated by phospho-EIIA on a cysteinyl residue. Then, it transfers the phosphoryl group to the sugar substrate concomitantly with the sugar uptake processed by the PTS EIIC type-3 domain.</text>
</comment>
<sequence length="570" mass="62414">MMQKLIAQIEKGKPFFEKLSRNIYLRAIRDGFISAMPVILFSSIFLLIAYVPNIFGFKWDKGMEAILMKPYNYTMGLVAFLVAGTTAKSLTDSFNRKLESTNQINFISTMLAAMCGFLFLASDPAKDGGFLSAFMGTKGLLTAFLSAFVTVIVYNFCVKRNITIKMPKEVPPNISQVFKDLIPFSAVIIILYALDLVIRNSFKSNVAEGILKLFEPLFTAADGWIGVTIIFGAFALFWFVGIHGPSIVEPAIAAITYANIEANFKLLQAGEHADKIITSGTQMFIVTFGGTGATLVVPFMFMWMTKSKRNKAIGRASVVPTFFGVNEPILFGAPLVLNPVFFIPFVLAPIVNVWIFKLFVEVLGINSFSVNLPWTTPGPLGIIMGTGFGLWSFVLAITLIVVDIIIYYPFLKVYDSEILDEEEGRKESNSDLKEKVAANFDTKKADSILAASGVSDDAAKASNITEQTNVLVLCAGGGTSGLLANALNKAAEEYHVPVKAAAGGYGAHMDIMKEYQLIILAPQVASNYEDIKQDTDRLGIKLAKTQGAEYIKLTRDGQAALDFVQQQFEN</sequence>
<protein>
    <recommendedName>
        <fullName evidence="1">PTS system lactose-specific EIICB component</fullName>
    </recommendedName>
    <alternativeName>
        <fullName evidence="1">EIICB-Lac</fullName>
        <shortName evidence="1">EII-Lac</shortName>
    </alternativeName>
    <domain>
        <recommendedName>
            <fullName evidence="1">PTS system lactose-specific EIIC component</fullName>
        </recommendedName>
        <alternativeName>
            <fullName evidence="1">Lactose permease IIC component</fullName>
        </alternativeName>
    </domain>
    <domain>
        <recommendedName>
            <fullName evidence="1">PTS system lactose-specific EIIB component</fullName>
            <ecNumber evidence="1">2.7.1.207</ecNumber>
        </recommendedName>
        <alternativeName>
            <fullName evidence="1">Lactose-specific phosphotransferase enzyme IIB component</fullName>
        </alternativeName>
    </domain>
</protein>
<dbReference type="EC" id="2.7.1.207" evidence="1"/>
<dbReference type="EMBL" id="BA000018">
    <property type="protein sequence ID" value="BAB43282.1"/>
    <property type="molecule type" value="Genomic_DNA"/>
</dbReference>
<dbReference type="PIR" id="A90015">
    <property type="entry name" value="A90015"/>
</dbReference>
<dbReference type="RefSeq" id="WP_000983324.1">
    <property type="nucleotide sequence ID" value="NC_002745.2"/>
</dbReference>
<dbReference type="SMR" id="Q99S77"/>
<dbReference type="EnsemblBacteria" id="BAB43282">
    <property type="protein sequence ID" value="BAB43282"/>
    <property type="gene ID" value="BAB43282"/>
</dbReference>
<dbReference type="KEGG" id="sau:SA1992"/>
<dbReference type="HOGENOM" id="CLU_029688_0_0_9"/>
<dbReference type="GO" id="GO:0005886">
    <property type="term" value="C:plasma membrane"/>
    <property type="evidence" value="ECO:0007669"/>
    <property type="project" value="UniProtKB-SubCell"/>
</dbReference>
<dbReference type="GO" id="GO:0016301">
    <property type="term" value="F:kinase activity"/>
    <property type="evidence" value="ECO:0007669"/>
    <property type="project" value="UniProtKB-KW"/>
</dbReference>
<dbReference type="GO" id="GO:0022869">
    <property type="term" value="F:protein-N(PI)-phosphohistidine-lactose phosphotransferase system transporter activity"/>
    <property type="evidence" value="ECO:0007669"/>
    <property type="project" value="InterPro"/>
</dbReference>
<dbReference type="GO" id="GO:1901264">
    <property type="term" value="P:carbohydrate derivative transport"/>
    <property type="evidence" value="ECO:0007669"/>
    <property type="project" value="TreeGrafter"/>
</dbReference>
<dbReference type="GO" id="GO:0009401">
    <property type="term" value="P:phosphoenolpyruvate-dependent sugar phosphotransferase system"/>
    <property type="evidence" value="ECO:0007669"/>
    <property type="project" value="UniProtKB-KW"/>
</dbReference>
<dbReference type="CDD" id="cd05565">
    <property type="entry name" value="PTS_IIB_lactose"/>
    <property type="match status" value="1"/>
</dbReference>
<dbReference type="Gene3D" id="3.40.50.2300">
    <property type="match status" value="1"/>
</dbReference>
<dbReference type="InterPro" id="IPR004801">
    <property type="entry name" value="LacE"/>
</dbReference>
<dbReference type="InterPro" id="IPR036095">
    <property type="entry name" value="PTS_EIIB-like_sf"/>
</dbReference>
<dbReference type="InterPro" id="IPR003501">
    <property type="entry name" value="PTS_EIIB_2/3"/>
</dbReference>
<dbReference type="InterPro" id="IPR013012">
    <property type="entry name" value="PTS_EIIB_3"/>
</dbReference>
<dbReference type="InterPro" id="IPR003352">
    <property type="entry name" value="PTS_EIIC"/>
</dbReference>
<dbReference type="InterPro" id="IPR004501">
    <property type="entry name" value="PTS_EIIC_3"/>
</dbReference>
<dbReference type="InterPro" id="IPR041713">
    <property type="entry name" value="PTS_IIB"/>
</dbReference>
<dbReference type="InterPro" id="IPR051088">
    <property type="entry name" value="PTS_Sugar-EIIC/EIIB"/>
</dbReference>
<dbReference type="NCBIfam" id="TIGR00394">
    <property type="entry name" value="lac_pts_IIC"/>
    <property type="match status" value="1"/>
</dbReference>
<dbReference type="NCBIfam" id="TIGR00410">
    <property type="entry name" value="lacE"/>
    <property type="match status" value="1"/>
</dbReference>
<dbReference type="NCBIfam" id="TIGR00853">
    <property type="entry name" value="pts-lac"/>
    <property type="match status" value="1"/>
</dbReference>
<dbReference type="PANTHER" id="PTHR33989">
    <property type="match status" value="1"/>
</dbReference>
<dbReference type="PANTHER" id="PTHR33989:SF8">
    <property type="entry name" value="PERMEASE IIC COMPONENT"/>
    <property type="match status" value="1"/>
</dbReference>
<dbReference type="Pfam" id="PF02378">
    <property type="entry name" value="PTS_EIIC"/>
    <property type="match status" value="1"/>
</dbReference>
<dbReference type="Pfam" id="PF02302">
    <property type="entry name" value="PTS_IIB"/>
    <property type="match status" value="1"/>
</dbReference>
<dbReference type="SUPFAM" id="SSF52794">
    <property type="entry name" value="PTS system IIB component-like"/>
    <property type="match status" value="1"/>
</dbReference>
<dbReference type="PROSITE" id="PS51100">
    <property type="entry name" value="PTS_EIIB_TYPE_3"/>
    <property type="match status" value="1"/>
</dbReference>
<dbReference type="PROSITE" id="PS51105">
    <property type="entry name" value="PTS_EIIC_TYPE_3"/>
    <property type="match status" value="1"/>
</dbReference>
<evidence type="ECO:0000250" key="1">
    <source>
        <dbReference type="UniProtKB" id="P11162"/>
    </source>
</evidence>
<evidence type="ECO:0000255" key="2">
    <source>
        <dbReference type="PROSITE-ProRule" id="PRU00423"/>
    </source>
</evidence>
<evidence type="ECO:0000255" key="3">
    <source>
        <dbReference type="PROSITE-ProRule" id="PRU00428"/>
    </source>
</evidence>
<feature type="chain" id="PRO_0000186587" description="PTS system lactose-specific EIICB component">
    <location>
        <begin position="1"/>
        <end position="570"/>
    </location>
</feature>
<feature type="transmembrane region" description="Helical" evidence="3">
    <location>
        <begin position="31"/>
        <end position="51"/>
    </location>
</feature>
<feature type="transmembrane region" description="Helical" evidence="3">
    <location>
        <begin position="65"/>
        <end position="85"/>
    </location>
</feature>
<feature type="transmembrane region" description="Helical" evidence="3">
    <location>
        <begin position="104"/>
        <end position="124"/>
    </location>
</feature>
<feature type="transmembrane region" description="Helical" evidence="3">
    <location>
        <begin position="133"/>
        <end position="153"/>
    </location>
</feature>
<feature type="transmembrane region" description="Helical" evidence="3">
    <location>
        <begin position="178"/>
        <end position="198"/>
    </location>
</feature>
<feature type="transmembrane region" description="Helical" evidence="3">
    <location>
        <begin position="223"/>
        <end position="243"/>
    </location>
</feature>
<feature type="transmembrane region" description="Helical" evidence="3">
    <location>
        <begin position="283"/>
        <end position="303"/>
    </location>
</feature>
<feature type="transmembrane region" description="Helical" evidence="3">
    <location>
        <begin position="340"/>
        <end position="360"/>
    </location>
</feature>
<feature type="transmembrane region" description="Helical" evidence="3">
    <location>
        <begin position="382"/>
        <end position="402"/>
    </location>
</feature>
<feature type="domain" description="PTS EIIC type-3" evidence="3">
    <location>
        <begin position="9"/>
        <end position="410"/>
    </location>
</feature>
<feature type="domain" description="PTS EIIB type-3" evidence="2">
    <location>
        <begin position="467"/>
        <end position="570"/>
    </location>
</feature>
<feature type="active site" description="Phosphocysteine intermediate; for EIIB activity" evidence="1">
    <location>
        <position position="474"/>
    </location>
</feature>
<feature type="modified residue" description="Phosphocysteine; by EIIA" evidence="1 2">
    <location>
        <position position="474"/>
    </location>
</feature>
<keyword id="KW-1003">Cell membrane</keyword>
<keyword id="KW-0418">Kinase</keyword>
<keyword id="KW-0472">Membrane</keyword>
<keyword id="KW-0597">Phosphoprotein</keyword>
<keyword id="KW-0598">Phosphotransferase system</keyword>
<keyword id="KW-0762">Sugar transport</keyword>
<keyword id="KW-0808">Transferase</keyword>
<keyword id="KW-0812">Transmembrane</keyword>
<keyword id="KW-1133">Transmembrane helix</keyword>
<keyword id="KW-0813">Transport</keyword>
<proteinExistence type="evidence at protein level"/>